<feature type="chain" id="PRO_0000308540" description="Formin-like protein 15a">
    <location>
        <begin position="1"/>
        <end position="405"/>
    </location>
</feature>
<feature type="domain" description="FH2" evidence="1">
    <location>
        <begin position="52"/>
        <end position="405"/>
    </location>
</feature>
<feature type="region of interest" description="Disordered" evidence="2">
    <location>
        <begin position="1"/>
        <end position="31"/>
    </location>
</feature>
<feature type="compositionally biased region" description="Pro residues" evidence="2">
    <location>
        <begin position="18"/>
        <end position="31"/>
    </location>
</feature>
<sequence>MSLVEISGSDAMAAPMPGRVPPPPPRPPPMPRRLPPMFDAFDHTGAGMVWGFPRPAKKRASLKPLHWVKITSDLQGSLWDELQRRHGDSQTAIELDISELETLFFVEAKPEKIRLHDLRRASYRVFNVINLSMPLPDMMTAVLAMDESVVDVDQIEKLIKFCPTNEEMELLKTYTGDKAALGKYEQYLLELMKVPRLEAKLRVFSFKTQFGTKITELKERLNVVTSACEENLLLIHQVRSSEKLKEIMKKIPCLGNTSNQGPDRGKTFLSPVEFKLDRLSVKRMHYFCKLKEIMKKIPCLGNTSKSNPRVGVKLDSSVSDTHTVKSMHYYCKVLASEASELLDVYKDLQSLESASKIQVKSLAQNIQAIIKRLEKLKQELTASETDGPASEVFCNVCWFFVRLMI</sequence>
<dbReference type="EMBL" id="AB010070">
    <property type="protein sequence ID" value="BAB11443.1"/>
    <property type="status" value="ALT_SEQ"/>
    <property type="molecule type" value="Genomic_DNA"/>
</dbReference>
<dbReference type="EMBL" id="CP002688">
    <property type="protein sequence ID" value="AED91189.1"/>
    <property type="status" value="ALT_SEQ"/>
    <property type="molecule type" value="Genomic_DNA"/>
</dbReference>
<dbReference type="SMR" id="P0C5K2"/>
<dbReference type="STRING" id="3702.P0C5K2"/>
<dbReference type="PeptideAtlas" id="P0C5K2"/>
<dbReference type="Araport" id="AT5G07650"/>
<dbReference type="TAIR" id="AT5G07650"/>
<dbReference type="HOGENOM" id="CLU_366986_0_0_1"/>
<dbReference type="InParanoid" id="P0C5K2"/>
<dbReference type="PRO" id="PR:P0C5K2"/>
<dbReference type="Proteomes" id="UP000006548">
    <property type="component" value="Chromosome 5"/>
</dbReference>
<dbReference type="ExpressionAtlas" id="P0C5K2">
    <property type="expression patterns" value="baseline and differential"/>
</dbReference>
<dbReference type="Gene3D" id="1.20.58.2220">
    <property type="entry name" value="Formin, FH2 domain"/>
    <property type="match status" value="1"/>
</dbReference>
<dbReference type="InterPro" id="IPR015425">
    <property type="entry name" value="FH2_Formin"/>
</dbReference>
<dbReference type="InterPro" id="IPR042201">
    <property type="entry name" value="FH2_Formin_sf"/>
</dbReference>
<dbReference type="InterPro" id="IPR051144">
    <property type="entry name" value="Formin_homology_domain"/>
</dbReference>
<dbReference type="PANTHER" id="PTHR45733">
    <property type="entry name" value="FORMIN-J"/>
    <property type="match status" value="1"/>
</dbReference>
<dbReference type="PANTHER" id="PTHR45733:SF10">
    <property type="entry name" value="FORMIN-LIKE PROTEIN 15A-RELATED"/>
    <property type="match status" value="1"/>
</dbReference>
<dbReference type="Pfam" id="PF02181">
    <property type="entry name" value="FH2"/>
    <property type="match status" value="2"/>
</dbReference>
<dbReference type="SMART" id="SM00498">
    <property type="entry name" value="FH2"/>
    <property type="match status" value="1"/>
</dbReference>
<dbReference type="SUPFAM" id="SSF101447">
    <property type="entry name" value="Formin homology 2 domain (FH2 domain)"/>
    <property type="match status" value="1"/>
</dbReference>
<dbReference type="PROSITE" id="PS51444">
    <property type="entry name" value="FH2"/>
    <property type="match status" value="1"/>
</dbReference>
<gene>
    <name type="primary">FH15A</name>
    <name type="ordered locus">At5g07650</name>
    <name type="ORF">MBK20.9</name>
</gene>
<organism>
    <name type="scientific">Arabidopsis thaliana</name>
    <name type="common">Mouse-ear cress</name>
    <dbReference type="NCBI Taxonomy" id="3702"/>
    <lineage>
        <taxon>Eukaryota</taxon>
        <taxon>Viridiplantae</taxon>
        <taxon>Streptophyta</taxon>
        <taxon>Embryophyta</taxon>
        <taxon>Tracheophyta</taxon>
        <taxon>Spermatophyta</taxon>
        <taxon>Magnoliopsida</taxon>
        <taxon>eudicotyledons</taxon>
        <taxon>Gunneridae</taxon>
        <taxon>Pentapetalae</taxon>
        <taxon>rosids</taxon>
        <taxon>malvids</taxon>
        <taxon>Brassicales</taxon>
        <taxon>Brassicaceae</taxon>
        <taxon>Camelineae</taxon>
        <taxon>Arabidopsis</taxon>
    </lineage>
</organism>
<proteinExistence type="evidence at transcript level"/>
<reference key="1">
    <citation type="journal article" date="1998" name="DNA Res.">
        <title>Structural analysis of Arabidopsis thaliana chromosome 5. IV. Sequence features of the regions of 1,456,315 bp covered by nineteen physically assigned P1 and TAC clones.</title>
        <authorList>
            <person name="Sato S."/>
            <person name="Kaneko T."/>
            <person name="Kotani H."/>
            <person name="Nakamura Y."/>
            <person name="Asamizu E."/>
            <person name="Miyajima N."/>
            <person name="Tabata S."/>
        </authorList>
    </citation>
    <scope>NUCLEOTIDE SEQUENCE [LARGE SCALE GENOMIC DNA]</scope>
    <source>
        <strain>cv. Columbia</strain>
    </source>
</reference>
<reference key="2">
    <citation type="journal article" date="2017" name="Plant J.">
        <title>Araport11: a complete reannotation of the Arabidopsis thaliana reference genome.</title>
        <authorList>
            <person name="Cheng C.Y."/>
            <person name="Krishnakumar V."/>
            <person name="Chan A.P."/>
            <person name="Thibaud-Nissen F."/>
            <person name="Schobel S."/>
            <person name="Town C.D."/>
        </authorList>
    </citation>
    <scope>GENOME REANNOTATION</scope>
    <source>
        <strain>cv. Columbia</strain>
    </source>
</reference>
<reference key="3">
    <citation type="journal article" date="2002" name="Trends Plant Sci.">
        <title>Formins: intermediates in signal-transduction cascades that affect cytoskeletal reorganization.</title>
        <authorList>
            <person name="Deeks M.J."/>
            <person name="Hussey P.J."/>
            <person name="Davies B."/>
        </authorList>
    </citation>
    <scope>GENE FAMILY ORGANIZATION</scope>
    <scope>NOMENCLATURE</scope>
</reference>
<reference key="4">
    <citation type="journal article" date="2004" name="BMC Genomics">
        <title>Formin homology 2 domains occur in multiple contexts in angiosperms.</title>
        <authorList>
            <person name="Cvrckova F."/>
            <person name="Novotny M."/>
            <person name="Pickova D."/>
            <person name="Zarsky V."/>
        </authorList>
    </citation>
    <scope>GENE FAMILY ORGANIZATION</scope>
    <scope>NOMENCLATURE</scope>
</reference>
<keyword id="KW-1185">Reference proteome</keyword>
<protein>
    <recommendedName>
        <fullName>Formin-like protein 15a</fullName>
        <shortName>AtFH15a</shortName>
    </recommendedName>
</protein>
<comment type="similarity">
    <text evidence="3">Belongs to the formin-like family. Class-II subfamily.</text>
</comment>
<comment type="sequence caution" evidence="3">
    <conflict type="erroneous gene model prediction">
        <sequence resource="EMBL-CDS" id="AED91189"/>
    </conflict>
    <text>The predicted gene At5g07650 has been split into 2 genes: At5g07645 and At5g07650.</text>
</comment>
<comment type="sequence caution" evidence="3">
    <conflict type="erroneous gene model prediction">
        <sequence resource="EMBL-CDS" id="BAB11443"/>
    </conflict>
    <text>The predicted gene At5g07650 has been split into 2 genes: At5g07645 and At5g07650.</text>
</comment>
<name>FH15A_ARATH</name>
<accession>P0C5K2</accession>
<accession>F4K838</accession>
<accession>Q9FLR6</accession>
<evidence type="ECO:0000255" key="1">
    <source>
        <dbReference type="PROSITE-ProRule" id="PRU00774"/>
    </source>
</evidence>
<evidence type="ECO:0000256" key="2">
    <source>
        <dbReference type="SAM" id="MobiDB-lite"/>
    </source>
</evidence>
<evidence type="ECO:0000305" key="3"/>